<accession>P42143</accession>
<proteinExistence type="evidence at transcript level"/>
<dbReference type="EMBL" id="L35446">
    <property type="protein sequence ID" value="AAA74613.1"/>
    <property type="molecule type" value="Genomic_DNA"/>
</dbReference>
<dbReference type="GO" id="GO:0000786">
    <property type="term" value="C:nucleosome"/>
    <property type="evidence" value="ECO:0007669"/>
    <property type="project" value="UniProtKB-KW"/>
</dbReference>
<dbReference type="GO" id="GO:0005634">
    <property type="term" value="C:nucleus"/>
    <property type="evidence" value="ECO:0007669"/>
    <property type="project" value="UniProtKB-SubCell"/>
</dbReference>
<dbReference type="GO" id="GO:0003677">
    <property type="term" value="F:DNA binding"/>
    <property type="evidence" value="ECO:0007669"/>
    <property type="project" value="UniProtKB-KW"/>
</dbReference>
<dbReference type="GO" id="GO:0030261">
    <property type="term" value="P:chromosome condensation"/>
    <property type="evidence" value="ECO:0007669"/>
    <property type="project" value="UniProtKB-KW"/>
</dbReference>
<dbReference type="GO" id="GO:0035092">
    <property type="term" value="P:sperm DNA condensation"/>
    <property type="evidence" value="ECO:0007669"/>
    <property type="project" value="InterPro"/>
</dbReference>
<dbReference type="InterPro" id="IPR000221">
    <property type="entry name" value="Protamine_P1"/>
</dbReference>
<dbReference type="PROSITE" id="PS00048">
    <property type="entry name" value="PROTAMINE_P1"/>
    <property type="match status" value="1"/>
</dbReference>
<name>HSP1_NOTTY</name>
<comment type="function">
    <text>Protamines substitute for histones in the chromatin of sperm during the haploid phase of spermatogenesis. They compact sperm DNA into a highly condensed, stable and inactive complex.</text>
</comment>
<comment type="subcellular location">
    <subcellularLocation>
        <location>Nucleus</location>
    </subcellularLocation>
    <subcellularLocation>
        <location>Chromosome</location>
    </subcellularLocation>
</comment>
<comment type="tissue specificity">
    <text>Testis.</text>
</comment>
<comment type="similarity">
    <text evidence="2">Belongs to the protamine P1 family.</text>
</comment>
<reference key="1">
    <citation type="journal article" date="1995" name="Proc. R. Soc. B">
        <title>Molecular phylogeny and evolution of marsupial protamine P1 genes.</title>
        <authorList>
            <person name="Retief J.D."/>
            <person name="Krajewski C."/>
            <person name="Westerman M."/>
            <person name="Winkfein R.J."/>
            <person name="Dixon G.H."/>
        </authorList>
    </citation>
    <scope>NUCLEOTIDE SEQUENCE [GENOMIC DNA]</scope>
    <source>
        <tissue>Sperm</tissue>
    </source>
</reference>
<sequence length="61" mass="8530">MARYRHSRSRSRSRYRRRRRRRSRYRSQRRRYRRHRRSGRRRRRGRRRGYRRRYHSHRRRY</sequence>
<keyword id="KW-0158">Chromosome</keyword>
<keyword id="KW-0217">Developmental protein</keyword>
<keyword id="KW-0221">Differentiation</keyword>
<keyword id="KW-0226">DNA condensation</keyword>
<keyword id="KW-0238">DNA-binding</keyword>
<keyword id="KW-0544">Nucleosome core</keyword>
<keyword id="KW-0539">Nucleus</keyword>
<keyword id="KW-0744">Spermatogenesis</keyword>
<evidence type="ECO:0000256" key="1">
    <source>
        <dbReference type="SAM" id="MobiDB-lite"/>
    </source>
</evidence>
<evidence type="ECO:0000305" key="2"/>
<feature type="chain" id="PRO_0000191513" description="Sperm protamine P1">
    <location>
        <begin position="1"/>
        <end position="61"/>
    </location>
</feature>
<feature type="region of interest" description="Disordered" evidence="1">
    <location>
        <begin position="1"/>
        <end position="61"/>
    </location>
</feature>
<gene>
    <name type="primary">PRM1</name>
</gene>
<protein>
    <recommendedName>
        <fullName>Sperm protamine P1</fullName>
    </recommendedName>
</protein>
<organism>
    <name type="scientific">Notoryctes typhlops</name>
    <name type="common">Southern marsupial mole</name>
    <name type="synonym">Psammoryctes typhlops</name>
    <dbReference type="NCBI Taxonomy" id="37699"/>
    <lineage>
        <taxon>Eukaryota</taxon>
        <taxon>Metazoa</taxon>
        <taxon>Chordata</taxon>
        <taxon>Craniata</taxon>
        <taxon>Vertebrata</taxon>
        <taxon>Euteleostomi</taxon>
        <taxon>Mammalia</taxon>
        <taxon>Metatheria</taxon>
        <taxon>Notoryctemorphia</taxon>
        <taxon>Notoryctidae</taxon>
        <taxon>Notoryctes</taxon>
    </lineage>
</organism>